<comment type="function">
    <text evidence="4 5 8 10">ATP-binding RNA helicase involved in the biogenesis of 60S ribosomal subunits and is required for the normal formation of 25S and 5.8S rRNAs.</text>
</comment>
<comment type="catalytic activity">
    <reaction>
        <text>ATP + H2O = ADP + phosphate + H(+)</text>
        <dbReference type="Rhea" id="RHEA:13065"/>
        <dbReference type="ChEBI" id="CHEBI:15377"/>
        <dbReference type="ChEBI" id="CHEBI:15378"/>
        <dbReference type="ChEBI" id="CHEBI:30616"/>
        <dbReference type="ChEBI" id="CHEBI:43474"/>
        <dbReference type="ChEBI" id="CHEBI:456216"/>
        <dbReference type="EC" id="3.6.4.13"/>
    </reaction>
</comment>
<comment type="subunit">
    <text evidence="5 8 9">Associated with pre-ribosomal particles. Interacts with DBP9 and RSA3. Together with NOP8, URB1, URB2 and RSA3, forms an RNA-independent complex, which is required during early maturation of nascent 60S ribosomal subunits.</text>
</comment>
<comment type="interaction">
    <interactant intactId="EBI-5625">
        <id>P53734</id>
    </interactant>
    <interactant intactId="EBI-33602">
        <id>Q05942</id>
        <label>RSA3</label>
    </interactant>
    <organismsDiffer>false</organismsDiffer>
    <experiments>4</experiments>
</comment>
<comment type="interaction">
    <interactant intactId="EBI-5625">
        <id>P53734</id>
    </interactant>
    <interactant intactId="EBI-26595">
        <id>P34241</id>
        <label>URB1</label>
    </interactant>
    <organismsDiffer>false</organismsDiffer>
    <experiments>5</experiments>
</comment>
<comment type="interaction">
    <interactant intactId="EBI-5625">
        <id>P53734</id>
    </interactant>
    <interactant intactId="EBI-25492">
        <id>P47108</id>
        <label>URB2</label>
    </interactant>
    <organismsDiffer>false</organismsDiffer>
    <experiments>5</experiments>
</comment>
<comment type="subcellular location">
    <subcellularLocation>
        <location evidence="6 10">Nucleus</location>
        <location evidence="6 10">Nucleolus</location>
    </subcellularLocation>
</comment>
<comment type="domain">
    <text>The Q motif is unique to and characteristic of the DEAD box family of RNA helicases and controls ATP binding and hydrolysis.</text>
</comment>
<comment type="miscellaneous">
    <text evidence="7">Present with 12700 molecules/cell in log phase SD medium.</text>
</comment>
<comment type="similarity">
    <text evidence="11">Belongs to the DEAD box helicase family. DDX51/DBP6 subfamily.</text>
</comment>
<gene>
    <name type="primary">DBP6</name>
    <name type="ordered locus">YNR038W</name>
    <name type="ORF">N3302</name>
</gene>
<reference key="1">
    <citation type="journal article" date="1997" name="Nature">
        <title>The nucleotide sequence of Saccharomyces cerevisiae chromosome XIV and its evolutionary implications.</title>
        <authorList>
            <person name="Philippsen P."/>
            <person name="Kleine K."/>
            <person name="Poehlmann R."/>
            <person name="Duesterhoeft A."/>
            <person name="Hamberg K."/>
            <person name="Hegemann J.H."/>
            <person name="Obermaier B."/>
            <person name="Urrestarazu L.A."/>
            <person name="Aert R."/>
            <person name="Albermann K."/>
            <person name="Altmann R."/>
            <person name="Andre B."/>
            <person name="Baladron V."/>
            <person name="Ballesta J.P.G."/>
            <person name="Becam A.-M."/>
            <person name="Beinhauer J.D."/>
            <person name="Boskovic J."/>
            <person name="Buitrago M.J."/>
            <person name="Bussereau F."/>
            <person name="Coster F."/>
            <person name="Crouzet M."/>
            <person name="D'Angelo M."/>
            <person name="Dal Pero F."/>
            <person name="De Antoni A."/>
            <person name="del Rey F."/>
            <person name="Doignon F."/>
            <person name="Domdey H."/>
            <person name="Dubois E."/>
            <person name="Fiedler T.A."/>
            <person name="Fleig U."/>
            <person name="Floeth M."/>
            <person name="Fritz C."/>
            <person name="Gaillardin C."/>
            <person name="Garcia-Cantalejo J.M."/>
            <person name="Glansdorff N."/>
            <person name="Goffeau A."/>
            <person name="Gueldener U."/>
            <person name="Herbert C.J."/>
            <person name="Heumann K."/>
            <person name="Heuss-Neitzel D."/>
            <person name="Hilbert H."/>
            <person name="Hinni K."/>
            <person name="Iraqui Houssaini I."/>
            <person name="Jacquet M."/>
            <person name="Jimenez A."/>
            <person name="Jonniaux J.-L."/>
            <person name="Karpfinger-Hartl L."/>
            <person name="Lanfranchi G."/>
            <person name="Lepingle A."/>
            <person name="Levesque H."/>
            <person name="Lyck R."/>
            <person name="Maftahi M."/>
            <person name="Mallet L."/>
            <person name="Maurer C.T.C."/>
            <person name="Messenguy F."/>
            <person name="Mewes H.-W."/>
            <person name="Moestl D."/>
            <person name="Nasr F."/>
            <person name="Nicaud J.-M."/>
            <person name="Niedenthal R.K."/>
            <person name="Pandolfo D."/>
            <person name="Pierard A."/>
            <person name="Piravandi E."/>
            <person name="Planta R.J."/>
            <person name="Pohl T.M."/>
            <person name="Purnelle B."/>
            <person name="Rebischung C."/>
            <person name="Remacha M.A."/>
            <person name="Revuelta J.L."/>
            <person name="Rinke M."/>
            <person name="Saiz J.E."/>
            <person name="Sartorello F."/>
            <person name="Scherens B."/>
            <person name="Sen-Gupta M."/>
            <person name="Soler-Mira A."/>
            <person name="Urbanus J.H.M."/>
            <person name="Valle G."/>
            <person name="Van Dyck L."/>
            <person name="Verhasselt P."/>
            <person name="Vierendeels F."/>
            <person name="Vissers S."/>
            <person name="Voet M."/>
            <person name="Volckaert G."/>
            <person name="Wach A."/>
            <person name="Wambutt R."/>
            <person name="Wedler H."/>
            <person name="Zollner A."/>
            <person name="Hani J."/>
        </authorList>
    </citation>
    <scope>NUCLEOTIDE SEQUENCE [LARGE SCALE GENOMIC DNA]</scope>
    <source>
        <strain>ATCC 204508 / S288c</strain>
    </source>
</reference>
<reference key="2">
    <citation type="journal article" date="2014" name="G3 (Bethesda)">
        <title>The reference genome sequence of Saccharomyces cerevisiae: Then and now.</title>
        <authorList>
            <person name="Engel S.R."/>
            <person name="Dietrich F.S."/>
            <person name="Fisk D.G."/>
            <person name="Binkley G."/>
            <person name="Balakrishnan R."/>
            <person name="Costanzo M.C."/>
            <person name="Dwight S.S."/>
            <person name="Hitz B.C."/>
            <person name="Karra K."/>
            <person name="Nash R.S."/>
            <person name="Weng S."/>
            <person name="Wong E.D."/>
            <person name="Lloyd P."/>
            <person name="Skrzypek M.S."/>
            <person name="Miyasato S.R."/>
            <person name="Simison M."/>
            <person name="Cherry J.M."/>
        </authorList>
    </citation>
    <scope>GENOME REANNOTATION</scope>
    <source>
        <strain>ATCC 204508 / S288c</strain>
    </source>
</reference>
<reference key="3">
    <citation type="journal article" date="1998" name="Mol. Cell. Biol.">
        <title>Dbp6p is an essential putative ATP-dependent RNA helicase required for 60S-ribosomal-subunit assembly in Saccharomyces cerevisiae.</title>
        <authorList>
            <person name="Kressler D."/>
            <person name="de la Cruz J."/>
            <person name="Rojo M."/>
            <person name="Linder P."/>
        </authorList>
    </citation>
    <scope>FUNCTION</scope>
    <scope>SUBCELLULAR LOCATION</scope>
</reference>
<reference key="4">
    <citation type="journal article" date="1999" name="Mol. Cell. Biol.">
        <title>Synthetic lethality with conditional dbp6 alleles identifies Rsa1p, a nucleoplasmic protein involved in the assembly of 60S ribosomal subunits.</title>
        <authorList>
            <person name="Kressler D."/>
            <person name="Doere M."/>
            <person name="Rojo M."/>
            <person name="Linder P."/>
        </authorList>
    </citation>
    <scope>FUNCTION</scope>
</reference>
<reference key="5">
    <citation type="journal article" date="2001" name="RNA">
        <title>Dbp9p, a putative ATP-dependent RNA helicase involved in 60S-ribosomal-subunit biogenesis, functionally interacts with Dbp6p.</title>
        <authorList>
            <person name="Daugeron M.-C."/>
            <person name="Kressler D."/>
            <person name="Linder P."/>
        </authorList>
    </citation>
    <scope>FUNCTION</scope>
    <scope>INTERACTION WITH DBP9</scope>
</reference>
<reference key="6">
    <citation type="journal article" date="2003" name="Nature">
        <title>Global analysis of protein localization in budding yeast.</title>
        <authorList>
            <person name="Huh W.-K."/>
            <person name="Falvo J.V."/>
            <person name="Gerke L.C."/>
            <person name="Carroll A.S."/>
            <person name="Howson R.W."/>
            <person name="Weissman J.S."/>
            <person name="O'Shea E.K."/>
        </authorList>
    </citation>
    <scope>SUBCELLULAR LOCATION [LARGE SCALE ANALYSIS]</scope>
</reference>
<reference key="7">
    <citation type="journal article" date="2003" name="Nature">
        <title>Global analysis of protein expression in yeast.</title>
        <authorList>
            <person name="Ghaemmaghami S."/>
            <person name="Huh W.-K."/>
            <person name="Bower K."/>
            <person name="Howson R.W."/>
            <person name="Belle A."/>
            <person name="Dephoure N."/>
            <person name="O'Shea E.K."/>
            <person name="Weissman J.S."/>
        </authorList>
    </citation>
    <scope>LEVEL OF PROTEIN EXPRESSION [LARGE SCALE ANALYSIS]</scope>
</reference>
<reference key="8">
    <citation type="journal article" date="2004" name="Genetics">
        <title>The putative RNA helicase Dbp6p functionally interacts with Rpl3p, Nop8p and the novel trans-acting Factor Rsa3p during biogenesis of 60S ribosomal subunits in Saccharomyces cerevisiae.</title>
        <authorList>
            <person name="de la Cruz J."/>
            <person name="Lacombe T."/>
            <person name="Deloche O."/>
            <person name="Linder P."/>
            <person name="Kressler D."/>
        </authorList>
    </citation>
    <scope>FUNCTION</scope>
    <scope>INTERACTION WITH RSA3</scope>
    <scope>ASSOCIATION WITH PRE-RIBOSOMAL PARTICLES</scope>
</reference>
<reference key="9">
    <citation type="journal article" date="2007" name="J. Proteome Res.">
        <title>Large-scale phosphorylation analysis of alpha-factor-arrested Saccharomyces cerevisiae.</title>
        <authorList>
            <person name="Li X."/>
            <person name="Gerber S.A."/>
            <person name="Rudner A.D."/>
            <person name="Beausoleil S.A."/>
            <person name="Haas W."/>
            <person name="Villen J."/>
            <person name="Elias J.E."/>
            <person name="Gygi S.P."/>
        </authorList>
    </citation>
    <scope>PHOSPHORYLATION [LARGE SCALE ANALYSIS] AT SER-73; SER-77 AND SER-78</scope>
    <scope>IDENTIFICATION BY MASS SPECTROMETRY [LARGE SCALE ANALYSIS]</scope>
    <source>
        <strain>ADR376</strain>
    </source>
</reference>
<reference key="10">
    <citation type="journal article" date="2007" name="Mol. Cell. Biol.">
        <title>Characterization of Saccharomyces cerevisiae Npa2p (Urb2p) reveals a Low-molecular-mass complex containing Dbp6p, Npa1p (Urb1p), Nop8p, and Rsa3p involved in early steps of 60S ribosomal subunit biogenesis.</title>
        <authorList>
            <person name="Rosado I.V."/>
            <person name="Dez C."/>
            <person name="Lebaron S."/>
            <person name="Caizergues-Ferrer M."/>
            <person name="Henry Y."/>
            <person name="de la Cruz J."/>
        </authorList>
    </citation>
    <scope>IDENTIFICATION IN A COMPLEX WITH NOP8; RSA3; URB1 AND URB2</scope>
</reference>
<reference key="11">
    <citation type="journal article" date="2009" name="Science">
        <title>Global analysis of Cdk1 substrate phosphorylation sites provides insights into evolution.</title>
        <authorList>
            <person name="Holt L.J."/>
            <person name="Tuch B.B."/>
            <person name="Villen J."/>
            <person name="Johnson A.D."/>
            <person name="Gygi S.P."/>
            <person name="Morgan D.O."/>
        </authorList>
    </citation>
    <scope>PHOSPHORYLATION [LARGE SCALE ANALYSIS] AT SER-73; SER-77 AND SER-78</scope>
    <scope>IDENTIFICATION BY MASS SPECTROMETRY [LARGE SCALE ANALYSIS]</scope>
</reference>
<protein>
    <recommendedName>
        <fullName>ATP-dependent RNA helicase DBP6</fullName>
        <ecNumber>3.6.4.13</ecNumber>
    </recommendedName>
    <alternativeName>
        <fullName>DEAD box protein 6</fullName>
    </alternativeName>
</protein>
<organism>
    <name type="scientific">Saccharomyces cerevisiae (strain ATCC 204508 / S288c)</name>
    <name type="common">Baker's yeast</name>
    <dbReference type="NCBI Taxonomy" id="559292"/>
    <lineage>
        <taxon>Eukaryota</taxon>
        <taxon>Fungi</taxon>
        <taxon>Dikarya</taxon>
        <taxon>Ascomycota</taxon>
        <taxon>Saccharomycotina</taxon>
        <taxon>Saccharomycetes</taxon>
        <taxon>Saccharomycetales</taxon>
        <taxon>Saccharomycetaceae</taxon>
        <taxon>Saccharomyces</taxon>
    </lineage>
</organism>
<name>DBP6_YEAST</name>
<dbReference type="EC" id="3.6.4.13"/>
<dbReference type="EMBL" id="Z71653">
    <property type="protein sequence ID" value="CAA96318.1"/>
    <property type="molecule type" value="Genomic_DNA"/>
</dbReference>
<dbReference type="EMBL" id="BK006947">
    <property type="protein sequence ID" value="DAA10580.1"/>
    <property type="molecule type" value="Genomic_DNA"/>
</dbReference>
<dbReference type="PIR" id="S63369">
    <property type="entry name" value="S63369"/>
</dbReference>
<dbReference type="RefSeq" id="NP_014436.1">
    <property type="nucleotide sequence ID" value="NM_001183215.1"/>
</dbReference>
<dbReference type="SMR" id="P53734"/>
<dbReference type="BioGRID" id="35864">
    <property type="interactions" value="292"/>
</dbReference>
<dbReference type="ComplexPortal" id="CPX-1421">
    <property type="entry name" value="NOP8 60s ribosome pre-assembly complex"/>
</dbReference>
<dbReference type="FunCoup" id="P53734">
    <property type="interactions" value="1038"/>
</dbReference>
<dbReference type="IntAct" id="P53734">
    <property type="interactions" value="46"/>
</dbReference>
<dbReference type="MINT" id="P53734"/>
<dbReference type="STRING" id="4932.YNR038W"/>
<dbReference type="iPTMnet" id="P53734"/>
<dbReference type="PaxDb" id="4932-YNR038W"/>
<dbReference type="PeptideAtlas" id="P53734"/>
<dbReference type="EnsemblFungi" id="YNR038W_mRNA">
    <property type="protein sequence ID" value="YNR038W"/>
    <property type="gene ID" value="YNR038W"/>
</dbReference>
<dbReference type="GeneID" id="855774"/>
<dbReference type="KEGG" id="sce:YNR038W"/>
<dbReference type="AGR" id="SGD:S000005321"/>
<dbReference type="SGD" id="S000005321">
    <property type="gene designation" value="DBP6"/>
</dbReference>
<dbReference type="VEuPathDB" id="FungiDB:YNR038W"/>
<dbReference type="eggNOG" id="KOG0350">
    <property type="taxonomic scope" value="Eukaryota"/>
</dbReference>
<dbReference type="GeneTree" id="ENSGT00550000075141"/>
<dbReference type="HOGENOM" id="CLU_003041_15_2_1"/>
<dbReference type="InParanoid" id="P53734"/>
<dbReference type="OMA" id="HLEWLVI"/>
<dbReference type="OrthoDB" id="3370at2759"/>
<dbReference type="BioCyc" id="YEAST:G3O-33348-MONOMER"/>
<dbReference type="BioGRID-ORCS" id="855774">
    <property type="hits" value="5 hits in 10 CRISPR screens"/>
</dbReference>
<dbReference type="CD-CODE" id="BDAE0F88">
    <property type="entry name" value="Nucleolus"/>
</dbReference>
<dbReference type="PRO" id="PR:P53734"/>
<dbReference type="Proteomes" id="UP000002311">
    <property type="component" value="Chromosome XIV"/>
</dbReference>
<dbReference type="RNAct" id="P53734">
    <property type="molecule type" value="protein"/>
</dbReference>
<dbReference type="GO" id="GO:0005730">
    <property type="term" value="C:nucleolus"/>
    <property type="evidence" value="ECO:0000314"/>
    <property type="project" value="SGD"/>
</dbReference>
<dbReference type="GO" id="GO:0005634">
    <property type="term" value="C:nucleus"/>
    <property type="evidence" value="ECO:0000318"/>
    <property type="project" value="GO_Central"/>
</dbReference>
<dbReference type="GO" id="GO:0030687">
    <property type="term" value="C:preribosome, large subunit precursor"/>
    <property type="evidence" value="ECO:0000314"/>
    <property type="project" value="SGD"/>
</dbReference>
<dbReference type="GO" id="GO:0005524">
    <property type="term" value="F:ATP binding"/>
    <property type="evidence" value="ECO:0007669"/>
    <property type="project" value="UniProtKB-KW"/>
</dbReference>
<dbReference type="GO" id="GO:0016887">
    <property type="term" value="F:ATP hydrolysis activity"/>
    <property type="evidence" value="ECO:0007669"/>
    <property type="project" value="RHEA"/>
</dbReference>
<dbReference type="GO" id="GO:0003723">
    <property type="term" value="F:RNA binding"/>
    <property type="evidence" value="ECO:0007669"/>
    <property type="project" value="UniProtKB-KW"/>
</dbReference>
<dbReference type="GO" id="GO:0003724">
    <property type="term" value="F:RNA helicase activity"/>
    <property type="evidence" value="ECO:0000250"/>
    <property type="project" value="SGD"/>
</dbReference>
<dbReference type="GO" id="GO:0000466">
    <property type="term" value="P:maturation of 5.8S rRNA from tricistronic rRNA transcript (SSU-rRNA, 5.8S rRNA, LSU-rRNA)"/>
    <property type="evidence" value="ECO:0000315"/>
    <property type="project" value="SGD"/>
</dbReference>
<dbReference type="GO" id="GO:0000463">
    <property type="term" value="P:maturation of LSU-rRNA from tricistronic rRNA transcript (SSU-rRNA, 5.8S rRNA, LSU-rRNA)"/>
    <property type="evidence" value="ECO:0000315"/>
    <property type="project" value="SGD"/>
</dbReference>
<dbReference type="GO" id="GO:0042273">
    <property type="term" value="P:ribosomal large subunit biogenesis"/>
    <property type="evidence" value="ECO:0000303"/>
    <property type="project" value="ComplexPortal"/>
</dbReference>
<dbReference type="CDD" id="cd17956">
    <property type="entry name" value="DEADc_DDX51"/>
    <property type="match status" value="1"/>
</dbReference>
<dbReference type="CDD" id="cd18787">
    <property type="entry name" value="SF2_C_DEAD"/>
    <property type="match status" value="1"/>
</dbReference>
<dbReference type="Gene3D" id="3.40.50.300">
    <property type="entry name" value="P-loop containing nucleotide triphosphate hydrolases"/>
    <property type="match status" value="2"/>
</dbReference>
<dbReference type="InterPro" id="IPR011545">
    <property type="entry name" value="DEAD/DEAH_box_helicase_dom"/>
</dbReference>
<dbReference type="InterPro" id="IPR014001">
    <property type="entry name" value="Helicase_ATP-bd"/>
</dbReference>
<dbReference type="InterPro" id="IPR001650">
    <property type="entry name" value="Helicase_C-like"/>
</dbReference>
<dbReference type="InterPro" id="IPR027417">
    <property type="entry name" value="P-loop_NTPase"/>
</dbReference>
<dbReference type="InterPro" id="IPR000629">
    <property type="entry name" value="RNA-helicase_DEAD-box_CS"/>
</dbReference>
<dbReference type="PANTHER" id="PTHR24031">
    <property type="entry name" value="RNA HELICASE"/>
    <property type="match status" value="1"/>
</dbReference>
<dbReference type="Pfam" id="PF00270">
    <property type="entry name" value="DEAD"/>
    <property type="match status" value="1"/>
</dbReference>
<dbReference type="Pfam" id="PF00271">
    <property type="entry name" value="Helicase_C"/>
    <property type="match status" value="1"/>
</dbReference>
<dbReference type="SMART" id="SM00487">
    <property type="entry name" value="DEXDc"/>
    <property type="match status" value="1"/>
</dbReference>
<dbReference type="SMART" id="SM00490">
    <property type="entry name" value="HELICc"/>
    <property type="match status" value="1"/>
</dbReference>
<dbReference type="SUPFAM" id="SSF52540">
    <property type="entry name" value="P-loop containing nucleoside triphosphate hydrolases"/>
    <property type="match status" value="1"/>
</dbReference>
<dbReference type="PROSITE" id="PS00039">
    <property type="entry name" value="DEAD_ATP_HELICASE"/>
    <property type="match status" value="1"/>
</dbReference>
<dbReference type="PROSITE" id="PS51192">
    <property type="entry name" value="HELICASE_ATP_BIND_1"/>
    <property type="match status" value="1"/>
</dbReference>
<dbReference type="PROSITE" id="PS51194">
    <property type="entry name" value="HELICASE_CTER"/>
    <property type="match status" value="1"/>
</dbReference>
<accession>P53734</accession>
<accession>D6W1L4</accession>
<keyword id="KW-0067">ATP-binding</keyword>
<keyword id="KW-0347">Helicase</keyword>
<keyword id="KW-0378">Hydrolase</keyword>
<keyword id="KW-0547">Nucleotide-binding</keyword>
<keyword id="KW-0539">Nucleus</keyword>
<keyword id="KW-0597">Phosphoprotein</keyword>
<keyword id="KW-1185">Reference proteome</keyword>
<keyword id="KW-0690">Ribosome biogenesis</keyword>
<keyword id="KW-0694">RNA-binding</keyword>
<keyword id="KW-0698">rRNA processing</keyword>
<evidence type="ECO:0000255" key="1">
    <source>
        <dbReference type="PROSITE-ProRule" id="PRU00541"/>
    </source>
</evidence>
<evidence type="ECO:0000255" key="2">
    <source>
        <dbReference type="PROSITE-ProRule" id="PRU00542"/>
    </source>
</evidence>
<evidence type="ECO:0000256" key="3">
    <source>
        <dbReference type="SAM" id="MobiDB-lite"/>
    </source>
</evidence>
<evidence type="ECO:0000269" key="4">
    <source>
    </source>
</evidence>
<evidence type="ECO:0000269" key="5">
    <source>
    </source>
</evidence>
<evidence type="ECO:0000269" key="6">
    <source>
    </source>
</evidence>
<evidence type="ECO:0000269" key="7">
    <source>
    </source>
</evidence>
<evidence type="ECO:0000269" key="8">
    <source>
    </source>
</evidence>
<evidence type="ECO:0000269" key="9">
    <source>
    </source>
</evidence>
<evidence type="ECO:0000269" key="10">
    <source>
    </source>
</evidence>
<evidence type="ECO:0000305" key="11"/>
<evidence type="ECO:0007744" key="12">
    <source>
    </source>
</evidence>
<evidence type="ECO:0007744" key="13">
    <source>
    </source>
</evidence>
<proteinExistence type="evidence at protein level"/>
<sequence length="629" mass="70362">MFASRFDPSQLTAPAASAPEGIVGTTPPAIVPLKRQATESDNEEYGSHQDSDESSNSSSEEDEDRMQVDYGASEEDSSEVEEEESKPSTHSTVLSRFKQTVSLQERLGASDIAESKEDEGIEDEAASTHQLKQIPQPEFVKNPMNLNTNSLQFKSTGWLNTEKIYYDNSLIKPFSDYANELEAKLLQNICKNFSTNTFPIQSIILDSILPVLNFTLNVSKRNFTRRIGDILVNAATGSGKTLAYSIPIVQTLFKRQINRLRCIIIVPTKLLINQVYTTLTKLTQGTSLIVSIAKLENSLKDEHKKLSNLEPDILITTPGRLVDHLNMKSINLKNLKFLIIDEADRLLNQSFQGWCPKLMSHLKTDKLDTLPGNVIKMIFSATLTTNTEKLNGLNLYKPKLFLKQTDKLYQLPNKLNEFNINIPTAKSVYKPLILLYSICQFMAHSPIAAKILIFVKSNESSIRLSKLLQLICESRSQSSVLKNLQNLAVSINSVNSNNSKAENKKIVANFSHHSESAGITILITTDIMSRGIDINDITQVINYDPPMSSQQYVHRVGRTARANELGSAYNLLVGRGERTFFDDLNKDLDRDGKSVQPLELDFTLLESDSELYTSSLESLKNYHNNTAQA</sequence>
<feature type="chain" id="PRO_0000055036" description="ATP-dependent RNA helicase DBP6">
    <location>
        <begin position="1"/>
        <end position="629"/>
    </location>
</feature>
<feature type="domain" description="Helicase ATP-binding" evidence="1">
    <location>
        <begin position="221"/>
        <end position="401"/>
    </location>
</feature>
<feature type="domain" description="Helicase C-terminal" evidence="2">
    <location>
        <begin position="437"/>
        <end position="603"/>
    </location>
</feature>
<feature type="region of interest" description="Disordered" evidence="3">
    <location>
        <begin position="1"/>
        <end position="129"/>
    </location>
</feature>
<feature type="short sequence motif" description="Q motif">
    <location>
        <begin position="197"/>
        <end position="205"/>
    </location>
</feature>
<feature type="short sequence motif" description="DEAD box">
    <location>
        <begin position="341"/>
        <end position="344"/>
    </location>
</feature>
<feature type="compositionally biased region" description="Acidic residues" evidence="3">
    <location>
        <begin position="72"/>
        <end position="84"/>
    </location>
</feature>
<feature type="compositionally biased region" description="Polar residues" evidence="3">
    <location>
        <begin position="88"/>
        <end position="103"/>
    </location>
</feature>
<feature type="compositionally biased region" description="Acidic residues" evidence="3">
    <location>
        <begin position="116"/>
        <end position="125"/>
    </location>
</feature>
<feature type="binding site" evidence="1">
    <location>
        <begin position="234"/>
        <end position="241"/>
    </location>
    <ligand>
        <name>ATP</name>
        <dbReference type="ChEBI" id="CHEBI:30616"/>
    </ligand>
</feature>
<feature type="modified residue" description="Phosphoserine" evidence="12 13">
    <location>
        <position position="73"/>
    </location>
</feature>
<feature type="modified residue" description="Phosphoserine" evidence="12 13">
    <location>
        <position position="77"/>
    </location>
</feature>
<feature type="modified residue" description="Phosphoserine" evidence="12 13">
    <location>
        <position position="78"/>
    </location>
</feature>